<sequence>METVLTARDLTRHYEVSRGLFKGHAQVRALNGVSFELEAGKTLAVVGESGCGKSTLARALTLIEEPTSGSLKIAGQEVKGASKDQRRQLRRDVQMVFQNPYASLNPRQKIGDQLAEPLLINTALSREERREKVQQMMRQVGLRPEHYQRYPHMFSGGQRQRIALARAMMLQPKVLVADEPTSALDVSIQAQVLNLFMDLQQQFRTAYVFISHNLAVVRHVADDVLVMYLGRPAEMGPADKLYENPLHPYTRALLSATPAIHPDPTKPKIRIQGELPNPLHPPEGCAFHKRCPYATERCRSEVPELRLLDQRQVACHHAEQFLG</sequence>
<name>DPPF_PSEAB</name>
<accession>A0A0H2ZH52</accession>
<organism>
    <name type="scientific">Pseudomonas aeruginosa (strain UCBPP-PA14)</name>
    <dbReference type="NCBI Taxonomy" id="208963"/>
    <lineage>
        <taxon>Bacteria</taxon>
        <taxon>Pseudomonadati</taxon>
        <taxon>Pseudomonadota</taxon>
        <taxon>Gammaproteobacteria</taxon>
        <taxon>Pseudomonadales</taxon>
        <taxon>Pseudomonadaceae</taxon>
        <taxon>Pseudomonas</taxon>
    </lineage>
</organism>
<keyword id="KW-0067">ATP-binding</keyword>
<keyword id="KW-0997">Cell inner membrane</keyword>
<keyword id="KW-1003">Cell membrane</keyword>
<keyword id="KW-0472">Membrane</keyword>
<keyword id="KW-0547">Nucleotide-binding</keyword>
<keyword id="KW-0571">Peptide transport</keyword>
<keyword id="KW-0653">Protein transport</keyword>
<keyword id="KW-1278">Translocase</keyword>
<keyword id="KW-0813">Transport</keyword>
<reference key="1">
    <citation type="journal article" date="2006" name="Genome Biol.">
        <title>Genomic analysis reveals that Pseudomonas aeruginosa virulence is combinatorial.</title>
        <authorList>
            <person name="Lee D.G."/>
            <person name="Urbach J.M."/>
            <person name="Wu G."/>
            <person name="Liberati N.T."/>
            <person name="Feinbaum R.L."/>
            <person name="Miyata S."/>
            <person name="Diggins L.T."/>
            <person name="He J."/>
            <person name="Saucier M."/>
            <person name="Deziel E."/>
            <person name="Friedman L."/>
            <person name="Li L."/>
            <person name="Grills G."/>
            <person name="Montgomery K."/>
            <person name="Kucherlapati R."/>
            <person name="Rahme L.G."/>
            <person name="Ausubel F.M."/>
        </authorList>
    </citation>
    <scope>NUCLEOTIDE SEQUENCE [LARGE SCALE GENOMIC DNA]</scope>
    <source>
        <strain>UCBPP-PA14</strain>
    </source>
</reference>
<reference key="2">
    <citation type="journal article" date="2014" name="PLoS ONE">
        <title>High-throughput screening of dipeptide utilization mediated by the ABC transporter DppBCDF and its substrate-binding proteins DppA1-A5 in Pseudomonas aeruginosa.</title>
        <authorList>
            <person name="Pletzer D."/>
            <person name="Lafon C."/>
            <person name="Braun Y."/>
            <person name="Koehler T."/>
            <person name="Page M.G."/>
            <person name="Mourez M."/>
            <person name="Weingart H."/>
        </authorList>
    </citation>
    <scope>FUNCTION</scope>
    <scope>SUBUNIT</scope>
    <scope>DISRUPTION PHENOTYPE</scope>
    <source>
        <strain>UCBPP-PA14</strain>
    </source>
</reference>
<comment type="function">
    <text evidence="3 5">Part of the ABC transporter DppABCDF involved in the uptake of various di/tripeptides (PubMed:25338022). Is also involved in the uptake of phaseolotoxin, a toxic tripeptide inhibiting the enzyme ornithine carbamoyltransferase (PubMed:25338022). Responsible for energy coupling to the transport system (Probable).</text>
</comment>
<comment type="catalytic activity">
    <reaction evidence="1">
        <text>a dipeptide(out) + ATP + H2O = a dipeptide(in) + ADP + phosphate + H(+)</text>
        <dbReference type="Rhea" id="RHEA:23120"/>
        <dbReference type="ChEBI" id="CHEBI:15377"/>
        <dbReference type="ChEBI" id="CHEBI:15378"/>
        <dbReference type="ChEBI" id="CHEBI:30616"/>
        <dbReference type="ChEBI" id="CHEBI:43474"/>
        <dbReference type="ChEBI" id="CHEBI:90799"/>
        <dbReference type="ChEBI" id="CHEBI:456216"/>
        <dbReference type="EC" id="7.4.2.9"/>
    </reaction>
</comment>
<comment type="subunit">
    <text evidence="3">The complex is composed of two ATP-binding proteins (DppD and DppF), two transmembrane proteins (DppB and DppC) and a solute-binding protein (DppA1-A5) (PubMed:25338022). Five orthologous SBPs (DppA1-A5) are present in P.aeruginosa, which increases the substrate specificity of the DppBCDF transporter (PubMed:25338022).</text>
</comment>
<comment type="subcellular location">
    <subcellularLocation>
        <location evidence="5">Cell inner membrane</location>
        <topology evidence="5">Peripheral membrane protein</topology>
    </subcellularLocation>
</comment>
<comment type="disruption phenotype">
    <text evidence="3">Deletion of the dppBCDF operon leads to reduced ability to utilize di/tripeptides as nitrogen source.</text>
</comment>
<comment type="similarity">
    <text evidence="5">Belongs to the ABC transporter superfamily.</text>
</comment>
<gene>
    <name evidence="4" type="primary">dppF</name>
    <name evidence="6" type="ordered locus">PA14_58490</name>
</gene>
<dbReference type="EC" id="7.4.2.9" evidence="1"/>
<dbReference type="EMBL" id="CP000438">
    <property type="protein sequence ID" value="ABJ13773.1"/>
    <property type="molecule type" value="Genomic_DNA"/>
</dbReference>
<dbReference type="RefSeq" id="WP_003110330.1">
    <property type="nucleotide sequence ID" value="NZ_CP034244.1"/>
</dbReference>
<dbReference type="SMR" id="A0A0H2ZH52"/>
<dbReference type="KEGG" id="pau:PA14_58490"/>
<dbReference type="HOGENOM" id="CLU_000604_1_23_6"/>
<dbReference type="BioCyc" id="PAER208963:G1G74-4925-MONOMER"/>
<dbReference type="Proteomes" id="UP000000653">
    <property type="component" value="Chromosome"/>
</dbReference>
<dbReference type="GO" id="GO:0005886">
    <property type="term" value="C:plasma membrane"/>
    <property type="evidence" value="ECO:0007669"/>
    <property type="project" value="UniProtKB-SubCell"/>
</dbReference>
<dbReference type="GO" id="GO:0005524">
    <property type="term" value="F:ATP binding"/>
    <property type="evidence" value="ECO:0007669"/>
    <property type="project" value="UniProtKB-KW"/>
</dbReference>
<dbReference type="GO" id="GO:0016887">
    <property type="term" value="F:ATP hydrolysis activity"/>
    <property type="evidence" value="ECO:0007669"/>
    <property type="project" value="InterPro"/>
</dbReference>
<dbReference type="GO" id="GO:0015833">
    <property type="term" value="P:peptide transport"/>
    <property type="evidence" value="ECO:0007669"/>
    <property type="project" value="UniProtKB-KW"/>
</dbReference>
<dbReference type="GO" id="GO:0015031">
    <property type="term" value="P:protein transport"/>
    <property type="evidence" value="ECO:0007669"/>
    <property type="project" value="UniProtKB-KW"/>
</dbReference>
<dbReference type="GO" id="GO:0055085">
    <property type="term" value="P:transmembrane transport"/>
    <property type="evidence" value="ECO:0007669"/>
    <property type="project" value="UniProtKB-ARBA"/>
</dbReference>
<dbReference type="CDD" id="cd03257">
    <property type="entry name" value="ABC_NikE_OppD_transporters"/>
    <property type="match status" value="1"/>
</dbReference>
<dbReference type="FunFam" id="3.40.50.300:FF:000016">
    <property type="entry name" value="Oligopeptide ABC transporter ATP-binding component"/>
    <property type="match status" value="1"/>
</dbReference>
<dbReference type="Gene3D" id="3.40.50.300">
    <property type="entry name" value="P-loop containing nucleotide triphosphate hydrolases"/>
    <property type="match status" value="1"/>
</dbReference>
<dbReference type="InterPro" id="IPR003593">
    <property type="entry name" value="AAA+_ATPase"/>
</dbReference>
<dbReference type="InterPro" id="IPR050319">
    <property type="entry name" value="ABC_transp_ATP-bind"/>
</dbReference>
<dbReference type="InterPro" id="IPR003439">
    <property type="entry name" value="ABC_transporter-like_ATP-bd"/>
</dbReference>
<dbReference type="InterPro" id="IPR017871">
    <property type="entry name" value="ABC_transporter-like_CS"/>
</dbReference>
<dbReference type="InterPro" id="IPR013563">
    <property type="entry name" value="Oligopep_ABC_C"/>
</dbReference>
<dbReference type="InterPro" id="IPR027417">
    <property type="entry name" value="P-loop_NTPase"/>
</dbReference>
<dbReference type="NCBIfam" id="TIGR01727">
    <property type="entry name" value="oligo_HPY"/>
    <property type="match status" value="1"/>
</dbReference>
<dbReference type="NCBIfam" id="NF008453">
    <property type="entry name" value="PRK11308.1"/>
    <property type="match status" value="1"/>
</dbReference>
<dbReference type="PANTHER" id="PTHR43776:SF6">
    <property type="entry name" value="DIPEPTIDE TRANSPORT ATP-BINDING PROTEIN DPPF"/>
    <property type="match status" value="1"/>
</dbReference>
<dbReference type="PANTHER" id="PTHR43776">
    <property type="entry name" value="TRANSPORT ATP-BINDING PROTEIN"/>
    <property type="match status" value="1"/>
</dbReference>
<dbReference type="Pfam" id="PF00005">
    <property type="entry name" value="ABC_tran"/>
    <property type="match status" value="1"/>
</dbReference>
<dbReference type="Pfam" id="PF08352">
    <property type="entry name" value="oligo_HPY"/>
    <property type="match status" value="1"/>
</dbReference>
<dbReference type="SMART" id="SM00382">
    <property type="entry name" value="AAA"/>
    <property type="match status" value="1"/>
</dbReference>
<dbReference type="SUPFAM" id="SSF52540">
    <property type="entry name" value="P-loop containing nucleoside triphosphate hydrolases"/>
    <property type="match status" value="1"/>
</dbReference>
<dbReference type="PROSITE" id="PS00211">
    <property type="entry name" value="ABC_TRANSPORTER_1"/>
    <property type="match status" value="1"/>
</dbReference>
<dbReference type="PROSITE" id="PS50893">
    <property type="entry name" value="ABC_TRANSPORTER_2"/>
    <property type="match status" value="1"/>
</dbReference>
<protein>
    <recommendedName>
        <fullName evidence="5">Di/tripeptide transport ATP-binding protein DppF</fullName>
        <ecNumber evidence="1">7.4.2.9</ecNumber>
    </recommendedName>
</protein>
<evidence type="ECO:0000250" key="1">
    <source>
        <dbReference type="UniProtKB" id="P0AAG0"/>
    </source>
</evidence>
<evidence type="ECO:0000255" key="2">
    <source>
        <dbReference type="PROSITE-ProRule" id="PRU00434"/>
    </source>
</evidence>
<evidence type="ECO:0000269" key="3">
    <source>
    </source>
</evidence>
<evidence type="ECO:0000303" key="4">
    <source>
    </source>
</evidence>
<evidence type="ECO:0000305" key="5"/>
<evidence type="ECO:0000312" key="6">
    <source>
        <dbReference type="EMBL" id="ABJ13773.1"/>
    </source>
</evidence>
<feature type="chain" id="PRO_0000452201" description="Di/tripeptide transport ATP-binding protein DppF">
    <location>
        <begin position="1"/>
        <end position="323"/>
    </location>
</feature>
<feature type="domain" description="ABC transporter" evidence="2">
    <location>
        <begin position="5"/>
        <end position="254"/>
    </location>
</feature>
<feature type="binding site" evidence="2">
    <location>
        <begin position="47"/>
        <end position="54"/>
    </location>
    <ligand>
        <name>ATP</name>
        <dbReference type="ChEBI" id="CHEBI:30616"/>
    </ligand>
</feature>
<proteinExistence type="evidence at protein level"/>